<proteinExistence type="inferred from homology"/>
<accession>Q01877</accession>
<sequence>MTKAIGIDLGTTYSCVGVWQNDRVEIIANDQGNRTTPSYVAFTDTERLIGDSAKNQVAMNPHNTVFDAKRLIGRKFADAEVQSDIKHFPFTVFDKGGKPYIRVQYRGEDKEFSPEEISSMILTKMKEVAESYLGGTVTSAVVTVPAYFNDSQRQATKDAGTISGLNVLRIINEPTAAAIAYGLDKKTVGERNVLIFDLGGGTFDVSLLTIEEGIFEVKATAGDTHLGGEDFDNRLVNHFVQEFKRKHKKDLSSNPRALRRLRTACERAKRTLSSAAQTTIEIDSLFEGVDFYTSLTRARFEELCQDLFRSTLEPVEKVLRDAKIDKAAVHEIVLVGGSTRIPRIVKLVSDFFNGKEPNKSINPDEAVAYGAAVQAAILTGDTSEKTQDLLLLDVSPLSLGIETAGGVMTPLIKRNTTVPTKKSEIFSTYSDNQPGVLIQVYEGERARTKDNNLLGKFELAGIPPAPRGVPQIEVTFDIDANGILNVSASDKTTGKSNRITITNDKGRLSKEEIERMVNEAEKYKAEDEEATARITSRNALESYAYNLRNSLTDEKLADKFDAADKKKLEDAVNSTISWLDNSQEASKEEYEEHQKELEAVANPIMQKLYAGAGGAPGGAPGGFPGGAPGGFPGGAPAGEDGPSVEEVD</sequence>
<name>HSP71_PUCGR</name>
<evidence type="ECO:0000256" key="1">
    <source>
        <dbReference type="SAM" id="MobiDB-lite"/>
    </source>
</evidence>
<evidence type="ECO:0000305" key="2"/>
<protein>
    <recommendedName>
        <fullName>Heat shock protein HSS1</fullName>
    </recommendedName>
</protein>
<reference key="1">
    <citation type="submission" date="1995-07" db="EMBL/GenBank/DDBJ databases">
        <authorList>
            <person name="Szabo L.J."/>
            <person name="Garry C."/>
            <person name="Staples R.C."/>
        </authorList>
    </citation>
    <scope>NUCLEOTIDE SEQUENCE [GENOMIC DNA]</scope>
    <source>
        <strain>Sp. tritici</strain>
    </source>
</reference>
<dbReference type="EMBL" id="U26597">
    <property type="protein sequence ID" value="AAB93665.1"/>
    <property type="molecule type" value="Genomic_DNA"/>
</dbReference>
<dbReference type="SMR" id="Q01877"/>
<dbReference type="VEuPathDB" id="FungiDB:PGTG_15321"/>
<dbReference type="GO" id="GO:0005737">
    <property type="term" value="C:cytoplasm"/>
    <property type="evidence" value="ECO:0007669"/>
    <property type="project" value="UniProtKB-SubCell"/>
</dbReference>
<dbReference type="GO" id="GO:0005524">
    <property type="term" value="F:ATP binding"/>
    <property type="evidence" value="ECO:0007669"/>
    <property type="project" value="UniProtKB-KW"/>
</dbReference>
<dbReference type="GO" id="GO:0140662">
    <property type="term" value="F:ATP-dependent protein folding chaperone"/>
    <property type="evidence" value="ECO:0007669"/>
    <property type="project" value="InterPro"/>
</dbReference>
<dbReference type="CDD" id="cd10233">
    <property type="entry name" value="ASKHA_NBD_HSP70_HSPA1"/>
    <property type="match status" value="1"/>
</dbReference>
<dbReference type="FunFam" id="2.60.34.10:FF:000002">
    <property type="entry name" value="Heat shock 70 kDa"/>
    <property type="match status" value="1"/>
</dbReference>
<dbReference type="FunFam" id="3.90.640.10:FF:000002">
    <property type="entry name" value="Heat shock 70 kDa"/>
    <property type="match status" value="1"/>
</dbReference>
<dbReference type="FunFam" id="3.30.420.40:FF:000172">
    <property type="entry name" value="Heat shock 70 kDa protein"/>
    <property type="match status" value="2"/>
</dbReference>
<dbReference type="FunFam" id="3.30.30.30:FF:000001">
    <property type="entry name" value="heat shock 70 kDa protein-like"/>
    <property type="match status" value="1"/>
</dbReference>
<dbReference type="FunFam" id="1.20.1270.10:FF:000021">
    <property type="entry name" value="Heat shock protein 70"/>
    <property type="match status" value="1"/>
</dbReference>
<dbReference type="FunFam" id="3.30.420.40:FF:000026">
    <property type="entry name" value="Heat shock protein 70"/>
    <property type="match status" value="1"/>
</dbReference>
<dbReference type="Gene3D" id="1.20.1270.10">
    <property type="match status" value="1"/>
</dbReference>
<dbReference type="Gene3D" id="3.30.30.30">
    <property type="match status" value="1"/>
</dbReference>
<dbReference type="Gene3D" id="3.30.420.40">
    <property type="match status" value="2"/>
</dbReference>
<dbReference type="Gene3D" id="3.90.640.10">
    <property type="entry name" value="Actin, Chain A, domain 4"/>
    <property type="match status" value="1"/>
</dbReference>
<dbReference type="Gene3D" id="2.60.34.10">
    <property type="entry name" value="Substrate Binding Domain Of DNAk, Chain A, domain 1"/>
    <property type="match status" value="1"/>
</dbReference>
<dbReference type="InterPro" id="IPR043129">
    <property type="entry name" value="ATPase_NBD"/>
</dbReference>
<dbReference type="InterPro" id="IPR018181">
    <property type="entry name" value="Heat_shock_70_CS"/>
</dbReference>
<dbReference type="InterPro" id="IPR029048">
    <property type="entry name" value="HSP70_C_sf"/>
</dbReference>
<dbReference type="InterPro" id="IPR029047">
    <property type="entry name" value="HSP70_peptide-bd_sf"/>
</dbReference>
<dbReference type="InterPro" id="IPR013126">
    <property type="entry name" value="Hsp_70_fam"/>
</dbReference>
<dbReference type="NCBIfam" id="NF001413">
    <property type="entry name" value="PRK00290.1"/>
    <property type="match status" value="1"/>
</dbReference>
<dbReference type="PANTHER" id="PTHR19375">
    <property type="entry name" value="HEAT SHOCK PROTEIN 70KDA"/>
    <property type="match status" value="1"/>
</dbReference>
<dbReference type="Pfam" id="PF00012">
    <property type="entry name" value="HSP70"/>
    <property type="match status" value="1"/>
</dbReference>
<dbReference type="PRINTS" id="PR00301">
    <property type="entry name" value="HEATSHOCK70"/>
</dbReference>
<dbReference type="SUPFAM" id="SSF53067">
    <property type="entry name" value="Actin-like ATPase domain"/>
    <property type="match status" value="2"/>
</dbReference>
<dbReference type="SUPFAM" id="SSF100934">
    <property type="entry name" value="Heat shock protein 70kD (HSP70), C-terminal subdomain"/>
    <property type="match status" value="1"/>
</dbReference>
<dbReference type="SUPFAM" id="SSF100920">
    <property type="entry name" value="Heat shock protein 70kD (HSP70), peptide-binding domain"/>
    <property type="match status" value="1"/>
</dbReference>
<dbReference type="PROSITE" id="PS00297">
    <property type="entry name" value="HSP70_1"/>
    <property type="match status" value="1"/>
</dbReference>
<dbReference type="PROSITE" id="PS00329">
    <property type="entry name" value="HSP70_2"/>
    <property type="match status" value="1"/>
</dbReference>
<dbReference type="PROSITE" id="PS01036">
    <property type="entry name" value="HSP70_3"/>
    <property type="match status" value="1"/>
</dbReference>
<comment type="subcellular location">
    <subcellularLocation>
        <location evidence="2">Cytoplasm</location>
    </subcellularLocation>
</comment>
<comment type="similarity">
    <text evidence="2">Belongs to the heat shock protein 70 family.</text>
</comment>
<keyword id="KW-0067">ATP-binding</keyword>
<keyword id="KW-0143">Chaperone</keyword>
<keyword id="KW-0963">Cytoplasm</keyword>
<keyword id="KW-0547">Nucleotide-binding</keyword>
<keyword id="KW-0346">Stress response</keyword>
<organism>
    <name type="scientific">Puccinia graminis</name>
    <name type="common">Black stem rust fungus</name>
    <dbReference type="NCBI Taxonomy" id="5297"/>
    <lineage>
        <taxon>Eukaryota</taxon>
        <taxon>Fungi</taxon>
        <taxon>Dikarya</taxon>
        <taxon>Basidiomycota</taxon>
        <taxon>Pucciniomycotina</taxon>
        <taxon>Pucciniomycetes</taxon>
        <taxon>Pucciniales</taxon>
        <taxon>Pucciniaceae</taxon>
        <taxon>Puccinia</taxon>
    </lineage>
</organism>
<feature type="chain" id="PRO_0000078378" description="Heat shock protein HSS1">
    <location>
        <begin position="1"/>
        <end position="648"/>
    </location>
</feature>
<feature type="region of interest" description="Disordered" evidence="1">
    <location>
        <begin position="609"/>
        <end position="648"/>
    </location>
</feature>
<feature type="compositionally biased region" description="Gly residues" evidence="1">
    <location>
        <begin position="611"/>
        <end position="636"/>
    </location>
</feature>
<gene>
    <name type="primary">HSS1</name>
</gene>